<comment type="function">
    <text evidence="1">Part of a membrane-bound complex that couples electron transfer with translocation of ions across the membrane. Required to maintain the reduced state of SoxR.</text>
</comment>
<comment type="subunit">
    <text evidence="1">The complex is composed of six subunits: RsxA, RsxB, RsxC, RsxD, RsxE and RsxG.</text>
</comment>
<comment type="subcellular location">
    <subcellularLocation>
        <location evidence="1">Cell inner membrane</location>
        <topology evidence="1">Multi-pass membrane protein</topology>
    </subcellularLocation>
</comment>
<comment type="similarity">
    <text evidence="1">Belongs to the NqrDE/RnfAE family.</text>
</comment>
<sequence length="193" mass="20893">MTDYLLLFVGTVLVNNFVLVKFLGLCPFMGVSKKLETAMGMGLATTFVMTLASICAWLIDTWILIPLDLIYLRTLAFILVIAVVVQFTEMVVRKTSPALYRLLGIFLPLITTNCAVLGVALLNINLGHHFLQSALYGFSAAVGFSLVMVLFAAIRERLAVADVPAPFRGNAIALITAGLMSLAFMGFSGLVKL</sequence>
<feature type="chain" id="PRO_1000013545" description="Ion-translocating oxidoreductase complex subunit A">
    <location>
        <begin position="1"/>
        <end position="193"/>
    </location>
</feature>
<feature type="transmembrane region" description="Helical" evidence="1">
    <location>
        <begin position="5"/>
        <end position="25"/>
    </location>
</feature>
<feature type="transmembrane region" description="Helical" evidence="1">
    <location>
        <begin position="47"/>
        <end position="67"/>
    </location>
</feature>
<feature type="transmembrane region" description="Helical" evidence="1">
    <location>
        <begin position="72"/>
        <end position="92"/>
    </location>
</feature>
<feature type="transmembrane region" description="Helical" evidence="1">
    <location>
        <begin position="102"/>
        <end position="122"/>
    </location>
</feature>
<feature type="transmembrane region" description="Helical" evidence="1">
    <location>
        <begin position="134"/>
        <end position="154"/>
    </location>
</feature>
<feature type="transmembrane region" description="Helical" evidence="1">
    <location>
        <begin position="171"/>
        <end position="191"/>
    </location>
</feature>
<name>RSXA_SALPA</name>
<accession>Q5PIC1</accession>
<organism>
    <name type="scientific">Salmonella paratyphi A (strain ATCC 9150 / SARB42)</name>
    <dbReference type="NCBI Taxonomy" id="295319"/>
    <lineage>
        <taxon>Bacteria</taxon>
        <taxon>Pseudomonadati</taxon>
        <taxon>Pseudomonadota</taxon>
        <taxon>Gammaproteobacteria</taxon>
        <taxon>Enterobacterales</taxon>
        <taxon>Enterobacteriaceae</taxon>
        <taxon>Salmonella</taxon>
    </lineage>
</organism>
<evidence type="ECO:0000255" key="1">
    <source>
        <dbReference type="HAMAP-Rule" id="MF_00459"/>
    </source>
</evidence>
<gene>
    <name evidence="1" type="primary">rsxA</name>
    <name type="ordered locus">SPA1394</name>
</gene>
<protein>
    <recommendedName>
        <fullName evidence="1">Ion-translocating oxidoreductase complex subunit A</fullName>
        <ecNumber evidence="1">7.-.-.-</ecNumber>
    </recommendedName>
    <alternativeName>
        <fullName evidence="1">Rsx electron transport complex subunit A</fullName>
    </alternativeName>
</protein>
<dbReference type="EC" id="7.-.-.-" evidence="1"/>
<dbReference type="EMBL" id="CP000026">
    <property type="protein sequence ID" value="AAV77335.1"/>
    <property type="molecule type" value="Genomic_DNA"/>
</dbReference>
<dbReference type="RefSeq" id="WP_000133179.1">
    <property type="nucleotide sequence ID" value="NC_006511.1"/>
</dbReference>
<dbReference type="SMR" id="Q5PIC1"/>
<dbReference type="GeneID" id="66755900"/>
<dbReference type="KEGG" id="spt:SPA1394"/>
<dbReference type="HOGENOM" id="CLU_095255_1_0_6"/>
<dbReference type="Proteomes" id="UP000008185">
    <property type="component" value="Chromosome"/>
</dbReference>
<dbReference type="GO" id="GO:0005886">
    <property type="term" value="C:plasma membrane"/>
    <property type="evidence" value="ECO:0007669"/>
    <property type="project" value="UniProtKB-SubCell"/>
</dbReference>
<dbReference type="GO" id="GO:0022900">
    <property type="term" value="P:electron transport chain"/>
    <property type="evidence" value="ECO:0007669"/>
    <property type="project" value="UniProtKB-UniRule"/>
</dbReference>
<dbReference type="HAMAP" id="MF_00459">
    <property type="entry name" value="RsxA_RnfA"/>
    <property type="match status" value="1"/>
</dbReference>
<dbReference type="InterPro" id="IPR011293">
    <property type="entry name" value="Ion_transpt_RnfA/RsxA"/>
</dbReference>
<dbReference type="InterPro" id="IPR003667">
    <property type="entry name" value="NqrDE/RnfAE"/>
</dbReference>
<dbReference type="InterPro" id="IPR050133">
    <property type="entry name" value="NqrDE/RnfAE_oxidrdctase"/>
</dbReference>
<dbReference type="NCBIfam" id="NF003481">
    <property type="entry name" value="PRK05151.1"/>
    <property type="match status" value="1"/>
</dbReference>
<dbReference type="NCBIfam" id="TIGR01943">
    <property type="entry name" value="rnfA"/>
    <property type="match status" value="1"/>
</dbReference>
<dbReference type="PANTHER" id="PTHR30335">
    <property type="entry name" value="INTEGRAL MEMBRANE PROTEIN OF SOXR-REDUCING COMPLEX"/>
    <property type="match status" value="1"/>
</dbReference>
<dbReference type="PANTHER" id="PTHR30335:SF0">
    <property type="entry name" value="ION-TRANSLOCATING OXIDOREDUCTASE COMPLEX SUBUNIT A"/>
    <property type="match status" value="1"/>
</dbReference>
<dbReference type="Pfam" id="PF02508">
    <property type="entry name" value="Rnf-Nqr"/>
    <property type="match status" value="1"/>
</dbReference>
<dbReference type="PIRSF" id="PIRSF006102">
    <property type="entry name" value="NQR_DE"/>
    <property type="match status" value="1"/>
</dbReference>
<proteinExistence type="inferred from homology"/>
<reference key="1">
    <citation type="journal article" date="2004" name="Nat. Genet.">
        <title>Comparison of genome degradation in Paratyphi A and Typhi, human-restricted serovars of Salmonella enterica that cause typhoid.</title>
        <authorList>
            <person name="McClelland M."/>
            <person name="Sanderson K.E."/>
            <person name="Clifton S.W."/>
            <person name="Latreille P."/>
            <person name="Porwollik S."/>
            <person name="Sabo A."/>
            <person name="Meyer R."/>
            <person name="Bieri T."/>
            <person name="Ozersky P."/>
            <person name="McLellan M."/>
            <person name="Harkins C.R."/>
            <person name="Wang C."/>
            <person name="Nguyen C."/>
            <person name="Berghoff A."/>
            <person name="Elliott G."/>
            <person name="Kohlberg S."/>
            <person name="Strong C."/>
            <person name="Du F."/>
            <person name="Carter J."/>
            <person name="Kremizki C."/>
            <person name="Layman D."/>
            <person name="Leonard S."/>
            <person name="Sun H."/>
            <person name="Fulton L."/>
            <person name="Nash W."/>
            <person name="Miner T."/>
            <person name="Minx P."/>
            <person name="Delehaunty K."/>
            <person name="Fronick C."/>
            <person name="Magrini V."/>
            <person name="Nhan M."/>
            <person name="Warren W."/>
            <person name="Florea L."/>
            <person name="Spieth J."/>
            <person name="Wilson R.K."/>
        </authorList>
    </citation>
    <scope>NUCLEOTIDE SEQUENCE [LARGE SCALE GENOMIC DNA]</scope>
    <source>
        <strain>ATCC 9150 / SARB42</strain>
    </source>
</reference>
<keyword id="KW-0997">Cell inner membrane</keyword>
<keyword id="KW-1003">Cell membrane</keyword>
<keyword id="KW-0249">Electron transport</keyword>
<keyword id="KW-0472">Membrane</keyword>
<keyword id="KW-1278">Translocase</keyword>
<keyword id="KW-0812">Transmembrane</keyword>
<keyword id="KW-1133">Transmembrane helix</keyword>
<keyword id="KW-0813">Transport</keyword>